<name>DNAK_BACC4</name>
<gene>
    <name evidence="1" type="primary">dnaK</name>
    <name type="ordered locus">BCB4264_A4433</name>
</gene>
<evidence type="ECO:0000255" key="1">
    <source>
        <dbReference type="HAMAP-Rule" id="MF_00332"/>
    </source>
</evidence>
<evidence type="ECO:0000256" key="2">
    <source>
        <dbReference type="SAM" id="MobiDB-lite"/>
    </source>
</evidence>
<proteinExistence type="inferred from homology"/>
<reference key="1">
    <citation type="submission" date="2008-10" db="EMBL/GenBank/DDBJ databases">
        <title>Genome sequence of Bacillus cereus B4264.</title>
        <authorList>
            <person name="Dodson R.J."/>
            <person name="Durkin A.S."/>
            <person name="Rosovitz M.J."/>
            <person name="Rasko D.A."/>
            <person name="Hoffmaster A."/>
            <person name="Ravel J."/>
            <person name="Sutton G."/>
        </authorList>
    </citation>
    <scope>NUCLEOTIDE SEQUENCE [LARGE SCALE GENOMIC DNA]</scope>
    <source>
        <strain>B4264</strain>
    </source>
</reference>
<comment type="function">
    <text evidence="1">Acts as a chaperone.</text>
</comment>
<comment type="induction">
    <text evidence="1">By stress conditions e.g. heat shock.</text>
</comment>
<comment type="similarity">
    <text evidence="1">Belongs to the heat shock protein 70 family.</text>
</comment>
<organism>
    <name type="scientific">Bacillus cereus (strain B4264)</name>
    <dbReference type="NCBI Taxonomy" id="405532"/>
    <lineage>
        <taxon>Bacteria</taxon>
        <taxon>Bacillati</taxon>
        <taxon>Bacillota</taxon>
        <taxon>Bacilli</taxon>
        <taxon>Bacillales</taxon>
        <taxon>Bacillaceae</taxon>
        <taxon>Bacillus</taxon>
        <taxon>Bacillus cereus group</taxon>
    </lineage>
</organism>
<sequence>MSKIIGIDLGTTNSCVAVMEGGEPKVIPNPEGNRTTPSVVAFKNEERQVGEVAKRQAITNPNTIMSVKRHMGTDYKVEVEGKDYTPQEISAIILQNLKASAEAYLGETVTKAVITVPAYFNDAERQATKDAGRIAGLEVERIINEPTAAALAYGLEKQDEEQKILVYDLGGGTFDVSILELADGTFEVISTAGDNRLGGDDFDQVIIDHLVAEFKKENNIDLSQDKMALQRLKDAAEKAKKDLSGVTQTQISLPFISAGAAGPLHLELTLTRAKFEELSAGLVERTLEPTRRALKDAGFAPSELDKVILVGGSTRIPAVQEAIKRETGKEPYKGVNPDEVVALGAAVQGGVLTGDVEGVLLLDVTPLSLGIETMGGVFTKLIERNTTIPTSKSQVFSTAADNQPAVDIHVLQGERPMSADNKTLGRFQLTDLPPAPRGIPQIEVTFDIDANGIVNVRAKDLGTSKEQAITIQSSSGLSDEEVERMVQEAEANADADQKRKEEVELRNEADQLVFQTDKVVKDLEGKVDAAEVAKATEAKEALQAAIEKNELEEIRAKKDALQEIVQQLTVKLYEQAQAAAGQAEGAQGAQDAGAKKDNVVDAEFEEVKEDK</sequence>
<accession>B7HCU0</accession>
<protein>
    <recommendedName>
        <fullName evidence="1">Chaperone protein DnaK</fullName>
    </recommendedName>
    <alternativeName>
        <fullName evidence="1">HSP70</fullName>
    </alternativeName>
    <alternativeName>
        <fullName evidence="1">Heat shock 70 kDa protein</fullName>
    </alternativeName>
    <alternativeName>
        <fullName evidence="1">Heat shock protein 70</fullName>
    </alternativeName>
</protein>
<feature type="chain" id="PRO_1000119667" description="Chaperone protein DnaK">
    <location>
        <begin position="1"/>
        <end position="611"/>
    </location>
</feature>
<feature type="region of interest" description="Disordered" evidence="2">
    <location>
        <begin position="579"/>
        <end position="598"/>
    </location>
</feature>
<feature type="compositionally biased region" description="Low complexity" evidence="2">
    <location>
        <begin position="579"/>
        <end position="592"/>
    </location>
</feature>
<feature type="modified residue" description="Phosphothreonine; by autocatalysis" evidence="1">
    <location>
        <position position="173"/>
    </location>
</feature>
<keyword id="KW-0067">ATP-binding</keyword>
<keyword id="KW-0143">Chaperone</keyword>
<keyword id="KW-0547">Nucleotide-binding</keyword>
<keyword id="KW-0597">Phosphoprotein</keyword>
<keyword id="KW-0346">Stress response</keyword>
<dbReference type="EMBL" id="CP001176">
    <property type="protein sequence ID" value="ACK59300.1"/>
    <property type="molecule type" value="Genomic_DNA"/>
</dbReference>
<dbReference type="RefSeq" id="WP_000034700.1">
    <property type="nucleotide sequence ID" value="NC_011725.1"/>
</dbReference>
<dbReference type="SMR" id="B7HCU0"/>
<dbReference type="GeneID" id="93006786"/>
<dbReference type="KEGG" id="bcb:BCB4264_A4433"/>
<dbReference type="HOGENOM" id="CLU_005965_2_4_9"/>
<dbReference type="Proteomes" id="UP000007096">
    <property type="component" value="Chromosome"/>
</dbReference>
<dbReference type="GO" id="GO:0005524">
    <property type="term" value="F:ATP binding"/>
    <property type="evidence" value="ECO:0007669"/>
    <property type="project" value="UniProtKB-UniRule"/>
</dbReference>
<dbReference type="GO" id="GO:0140662">
    <property type="term" value="F:ATP-dependent protein folding chaperone"/>
    <property type="evidence" value="ECO:0007669"/>
    <property type="project" value="InterPro"/>
</dbReference>
<dbReference type="GO" id="GO:0051082">
    <property type="term" value="F:unfolded protein binding"/>
    <property type="evidence" value="ECO:0007669"/>
    <property type="project" value="InterPro"/>
</dbReference>
<dbReference type="CDD" id="cd10234">
    <property type="entry name" value="ASKHA_NBD_HSP70_DnaK-like"/>
    <property type="match status" value="1"/>
</dbReference>
<dbReference type="FunFam" id="2.60.34.10:FF:000014">
    <property type="entry name" value="Chaperone protein DnaK HSP70"/>
    <property type="match status" value="1"/>
</dbReference>
<dbReference type="FunFam" id="1.20.1270.10:FF:000004">
    <property type="entry name" value="Molecular chaperone DnaK"/>
    <property type="match status" value="1"/>
</dbReference>
<dbReference type="FunFam" id="3.30.420.40:FF:000071">
    <property type="entry name" value="Molecular chaperone DnaK"/>
    <property type="match status" value="1"/>
</dbReference>
<dbReference type="FunFam" id="3.90.640.10:FF:000003">
    <property type="entry name" value="Molecular chaperone DnaK"/>
    <property type="match status" value="1"/>
</dbReference>
<dbReference type="Gene3D" id="1.20.1270.10">
    <property type="match status" value="1"/>
</dbReference>
<dbReference type="Gene3D" id="3.30.420.40">
    <property type="match status" value="2"/>
</dbReference>
<dbReference type="Gene3D" id="3.90.640.10">
    <property type="entry name" value="Actin, Chain A, domain 4"/>
    <property type="match status" value="1"/>
</dbReference>
<dbReference type="Gene3D" id="2.60.34.10">
    <property type="entry name" value="Substrate Binding Domain Of DNAk, Chain A, domain 1"/>
    <property type="match status" value="1"/>
</dbReference>
<dbReference type="HAMAP" id="MF_00332">
    <property type="entry name" value="DnaK"/>
    <property type="match status" value="1"/>
</dbReference>
<dbReference type="InterPro" id="IPR043129">
    <property type="entry name" value="ATPase_NBD"/>
</dbReference>
<dbReference type="InterPro" id="IPR012725">
    <property type="entry name" value="Chaperone_DnaK"/>
</dbReference>
<dbReference type="InterPro" id="IPR018181">
    <property type="entry name" value="Heat_shock_70_CS"/>
</dbReference>
<dbReference type="InterPro" id="IPR029048">
    <property type="entry name" value="HSP70_C_sf"/>
</dbReference>
<dbReference type="InterPro" id="IPR029047">
    <property type="entry name" value="HSP70_peptide-bd_sf"/>
</dbReference>
<dbReference type="InterPro" id="IPR013126">
    <property type="entry name" value="Hsp_70_fam"/>
</dbReference>
<dbReference type="NCBIfam" id="NF001413">
    <property type="entry name" value="PRK00290.1"/>
    <property type="match status" value="1"/>
</dbReference>
<dbReference type="NCBIfam" id="TIGR02350">
    <property type="entry name" value="prok_dnaK"/>
    <property type="match status" value="1"/>
</dbReference>
<dbReference type="PANTHER" id="PTHR19375">
    <property type="entry name" value="HEAT SHOCK PROTEIN 70KDA"/>
    <property type="match status" value="1"/>
</dbReference>
<dbReference type="Pfam" id="PF00012">
    <property type="entry name" value="HSP70"/>
    <property type="match status" value="1"/>
</dbReference>
<dbReference type="PRINTS" id="PR00301">
    <property type="entry name" value="HEATSHOCK70"/>
</dbReference>
<dbReference type="SUPFAM" id="SSF53067">
    <property type="entry name" value="Actin-like ATPase domain"/>
    <property type="match status" value="2"/>
</dbReference>
<dbReference type="SUPFAM" id="SSF100934">
    <property type="entry name" value="Heat shock protein 70kD (HSP70), C-terminal subdomain"/>
    <property type="match status" value="1"/>
</dbReference>
<dbReference type="SUPFAM" id="SSF100920">
    <property type="entry name" value="Heat shock protein 70kD (HSP70), peptide-binding domain"/>
    <property type="match status" value="1"/>
</dbReference>
<dbReference type="PROSITE" id="PS00297">
    <property type="entry name" value="HSP70_1"/>
    <property type="match status" value="1"/>
</dbReference>
<dbReference type="PROSITE" id="PS00329">
    <property type="entry name" value="HSP70_2"/>
    <property type="match status" value="1"/>
</dbReference>
<dbReference type="PROSITE" id="PS01036">
    <property type="entry name" value="HSP70_3"/>
    <property type="match status" value="1"/>
</dbReference>